<protein>
    <recommendedName>
        <fullName evidence="1">Bifunctional protein GlmU</fullName>
    </recommendedName>
    <domain>
        <recommendedName>
            <fullName evidence="1">UDP-N-acetylglucosamine pyrophosphorylase</fullName>
            <ecNumber evidence="1">2.7.7.23</ecNumber>
        </recommendedName>
        <alternativeName>
            <fullName evidence="1">N-acetylglucosamine-1-phosphate uridyltransferase</fullName>
        </alternativeName>
    </domain>
    <domain>
        <recommendedName>
            <fullName evidence="1">Glucosamine-1-phosphate N-acetyltransferase</fullName>
            <ecNumber evidence="1">2.3.1.157</ecNumber>
        </recommendedName>
    </domain>
</protein>
<reference key="1">
    <citation type="journal article" date="2006" name="Genome Res.">
        <title>Skewed genomic variability in strains of the toxigenic bacterial pathogen, Clostridium perfringens.</title>
        <authorList>
            <person name="Myers G.S.A."/>
            <person name="Rasko D.A."/>
            <person name="Cheung J.K."/>
            <person name="Ravel J."/>
            <person name="Seshadri R."/>
            <person name="DeBoy R.T."/>
            <person name="Ren Q."/>
            <person name="Varga J."/>
            <person name="Awad M.M."/>
            <person name="Brinkac L.M."/>
            <person name="Daugherty S.C."/>
            <person name="Haft D.H."/>
            <person name="Dodson R.J."/>
            <person name="Madupu R."/>
            <person name="Nelson W.C."/>
            <person name="Rosovitz M.J."/>
            <person name="Sullivan S.A."/>
            <person name="Khouri H."/>
            <person name="Dimitrov G.I."/>
            <person name="Watkins K.L."/>
            <person name="Mulligan S."/>
            <person name="Benton J."/>
            <person name="Radune D."/>
            <person name="Fisher D.J."/>
            <person name="Atkins H.S."/>
            <person name="Hiscox T."/>
            <person name="Jost B.H."/>
            <person name="Billington S.J."/>
            <person name="Songer J.G."/>
            <person name="McClane B.A."/>
            <person name="Titball R.W."/>
            <person name="Rood J.I."/>
            <person name="Melville S.B."/>
            <person name="Paulsen I.T."/>
        </authorList>
    </citation>
    <scope>NUCLEOTIDE SEQUENCE [LARGE SCALE GENOMIC DNA]</scope>
    <source>
        <strain>ATCC 13124 / DSM 756 / JCM 1290 / NCIMB 6125 / NCTC 8237 / S 107 / Type A</strain>
    </source>
</reference>
<organism>
    <name type="scientific">Clostridium perfringens (strain ATCC 13124 / DSM 756 / JCM 1290 / NCIMB 6125 / NCTC 8237 / Type A)</name>
    <dbReference type="NCBI Taxonomy" id="195103"/>
    <lineage>
        <taxon>Bacteria</taxon>
        <taxon>Bacillati</taxon>
        <taxon>Bacillota</taxon>
        <taxon>Clostridia</taxon>
        <taxon>Eubacteriales</taxon>
        <taxon>Clostridiaceae</taxon>
        <taxon>Clostridium</taxon>
    </lineage>
</organism>
<feature type="chain" id="PRO_0000263124" description="Bifunctional protein GlmU">
    <location>
        <begin position="1"/>
        <end position="454"/>
    </location>
</feature>
<feature type="region of interest" description="Pyrophosphorylase" evidence="1">
    <location>
        <begin position="1"/>
        <end position="228"/>
    </location>
</feature>
<feature type="region of interest" description="Linker" evidence="1">
    <location>
        <begin position="229"/>
        <end position="249"/>
    </location>
</feature>
<feature type="region of interest" description="N-acetyltransferase" evidence="1">
    <location>
        <begin position="250"/>
        <end position="454"/>
    </location>
</feature>
<feature type="active site" description="Proton acceptor" evidence="1">
    <location>
        <position position="361"/>
    </location>
</feature>
<feature type="binding site" evidence="1">
    <location>
        <begin position="8"/>
        <end position="11"/>
    </location>
    <ligand>
        <name>UDP-N-acetyl-alpha-D-glucosamine</name>
        <dbReference type="ChEBI" id="CHEBI:57705"/>
    </ligand>
</feature>
<feature type="binding site" evidence="1">
    <location>
        <position position="22"/>
    </location>
    <ligand>
        <name>UDP-N-acetyl-alpha-D-glucosamine</name>
        <dbReference type="ChEBI" id="CHEBI:57705"/>
    </ligand>
</feature>
<feature type="binding site" evidence="1">
    <location>
        <position position="73"/>
    </location>
    <ligand>
        <name>UDP-N-acetyl-alpha-D-glucosamine</name>
        <dbReference type="ChEBI" id="CHEBI:57705"/>
    </ligand>
</feature>
<feature type="binding site" evidence="1">
    <location>
        <begin position="78"/>
        <end position="79"/>
    </location>
    <ligand>
        <name>UDP-N-acetyl-alpha-D-glucosamine</name>
        <dbReference type="ChEBI" id="CHEBI:57705"/>
    </ligand>
</feature>
<feature type="binding site" evidence="1">
    <location>
        <position position="103"/>
    </location>
    <ligand>
        <name>Mg(2+)</name>
        <dbReference type="ChEBI" id="CHEBI:18420"/>
    </ligand>
</feature>
<feature type="binding site" evidence="1">
    <location>
        <position position="140"/>
    </location>
    <ligand>
        <name>UDP-N-acetyl-alpha-D-glucosamine</name>
        <dbReference type="ChEBI" id="CHEBI:57705"/>
    </ligand>
</feature>
<feature type="binding site" evidence="1">
    <location>
        <position position="154"/>
    </location>
    <ligand>
        <name>UDP-N-acetyl-alpha-D-glucosamine</name>
        <dbReference type="ChEBI" id="CHEBI:57705"/>
    </ligand>
</feature>
<feature type="binding site" evidence="1">
    <location>
        <position position="169"/>
    </location>
    <ligand>
        <name>UDP-N-acetyl-alpha-D-glucosamine</name>
        <dbReference type="ChEBI" id="CHEBI:57705"/>
    </ligand>
</feature>
<feature type="binding site" evidence="1">
    <location>
        <position position="226"/>
    </location>
    <ligand>
        <name>Mg(2+)</name>
        <dbReference type="ChEBI" id="CHEBI:18420"/>
    </ligand>
</feature>
<feature type="binding site" evidence="1">
    <location>
        <position position="226"/>
    </location>
    <ligand>
        <name>UDP-N-acetyl-alpha-D-glucosamine</name>
        <dbReference type="ChEBI" id="CHEBI:57705"/>
    </ligand>
</feature>
<feature type="binding site" evidence="1">
    <location>
        <position position="331"/>
    </location>
    <ligand>
        <name>UDP-N-acetyl-alpha-D-glucosamine</name>
        <dbReference type="ChEBI" id="CHEBI:57705"/>
    </ligand>
</feature>
<feature type="binding site" evidence="1">
    <location>
        <position position="349"/>
    </location>
    <ligand>
        <name>UDP-N-acetyl-alpha-D-glucosamine</name>
        <dbReference type="ChEBI" id="CHEBI:57705"/>
    </ligand>
</feature>
<feature type="binding site" evidence="1">
    <location>
        <position position="364"/>
    </location>
    <ligand>
        <name>UDP-N-acetyl-alpha-D-glucosamine</name>
        <dbReference type="ChEBI" id="CHEBI:57705"/>
    </ligand>
</feature>
<feature type="binding site" evidence="1">
    <location>
        <position position="375"/>
    </location>
    <ligand>
        <name>UDP-N-acetyl-alpha-D-glucosamine</name>
        <dbReference type="ChEBI" id="CHEBI:57705"/>
    </ligand>
</feature>
<feature type="binding site" evidence="1">
    <location>
        <begin position="384"/>
        <end position="385"/>
    </location>
    <ligand>
        <name>acetyl-CoA</name>
        <dbReference type="ChEBI" id="CHEBI:57288"/>
    </ligand>
</feature>
<feature type="binding site" evidence="1">
    <location>
        <position position="421"/>
    </location>
    <ligand>
        <name>acetyl-CoA</name>
        <dbReference type="ChEBI" id="CHEBI:57288"/>
    </ligand>
</feature>
<feature type="binding site" evidence="1">
    <location>
        <position position="438"/>
    </location>
    <ligand>
        <name>acetyl-CoA</name>
        <dbReference type="ChEBI" id="CHEBI:57288"/>
    </ligand>
</feature>
<accession>Q0TMG3</accession>
<evidence type="ECO:0000255" key="1">
    <source>
        <dbReference type="HAMAP-Rule" id="MF_01631"/>
    </source>
</evidence>
<gene>
    <name evidence="1" type="primary">glmU</name>
    <name type="ordered locus">CPF_2813</name>
</gene>
<proteinExistence type="inferred from homology"/>
<name>GLMU_CLOP1</name>
<sequence length="454" mass="49662">MNKCAIILAAGQGTRIKSKLPKVLHKACGKEMVNHVIDAMRNAEIDDVNVIIGKGAELVKERTTSRNVSYSLQAEQLGTGHAVKCAKDFLEGKTGVVAIFTGDAPLIKPETVKNLVDTHINEKNSATLLTSVIENPTGYGRIVRNGESVEKIVEHKDCNEQEIKIQEINAGMYCFDIESLLTSLEQLSNDNAQGEYYLTDVIEILKKENKKVGAMITDFEETLGVNSRAELAKVESIMRNRINRTHLDNGVTIIDPLNTYIEPEVVIGKDTIIYPGNVIEGKTVIGEDCVLYPNSRINNSTIGNGVEIQSSVILDSKIGDETTVGPFAYVRPESNIGEHVRIGDFVEIKKSTIGNNTKVSHLTYIGDAEVGERCNFGCGTVVVNYDGKKKHKTIIGDDSFIGCNTNLVSPVEVKDNTYIAAGSTITKEVPEGSLAIARAKQQNIEGWVERKKLK</sequence>
<dbReference type="EC" id="2.7.7.23" evidence="1"/>
<dbReference type="EC" id="2.3.1.157" evidence="1"/>
<dbReference type="EMBL" id="CP000246">
    <property type="protein sequence ID" value="ABG82440.1"/>
    <property type="molecule type" value="Genomic_DNA"/>
</dbReference>
<dbReference type="RefSeq" id="WP_003456738.1">
    <property type="nucleotide sequence ID" value="NC_008261.1"/>
</dbReference>
<dbReference type="SMR" id="Q0TMG3"/>
<dbReference type="STRING" id="195103.CPF_2813"/>
<dbReference type="PaxDb" id="195103-CPF_2813"/>
<dbReference type="GeneID" id="93000906"/>
<dbReference type="KEGG" id="cpf:CPF_2813"/>
<dbReference type="eggNOG" id="COG1207">
    <property type="taxonomic scope" value="Bacteria"/>
</dbReference>
<dbReference type="HOGENOM" id="CLU_029499_15_2_9"/>
<dbReference type="UniPathway" id="UPA00113">
    <property type="reaction ID" value="UER00532"/>
</dbReference>
<dbReference type="UniPathway" id="UPA00113">
    <property type="reaction ID" value="UER00533"/>
</dbReference>
<dbReference type="UniPathway" id="UPA00973"/>
<dbReference type="Proteomes" id="UP000001823">
    <property type="component" value="Chromosome"/>
</dbReference>
<dbReference type="GO" id="GO:0005737">
    <property type="term" value="C:cytoplasm"/>
    <property type="evidence" value="ECO:0007669"/>
    <property type="project" value="UniProtKB-SubCell"/>
</dbReference>
<dbReference type="GO" id="GO:0016020">
    <property type="term" value="C:membrane"/>
    <property type="evidence" value="ECO:0007669"/>
    <property type="project" value="GOC"/>
</dbReference>
<dbReference type="GO" id="GO:0019134">
    <property type="term" value="F:glucosamine-1-phosphate N-acetyltransferase activity"/>
    <property type="evidence" value="ECO:0007669"/>
    <property type="project" value="UniProtKB-UniRule"/>
</dbReference>
<dbReference type="GO" id="GO:0000287">
    <property type="term" value="F:magnesium ion binding"/>
    <property type="evidence" value="ECO:0007669"/>
    <property type="project" value="UniProtKB-UniRule"/>
</dbReference>
<dbReference type="GO" id="GO:0003977">
    <property type="term" value="F:UDP-N-acetylglucosamine diphosphorylase activity"/>
    <property type="evidence" value="ECO:0007669"/>
    <property type="project" value="UniProtKB-UniRule"/>
</dbReference>
<dbReference type="GO" id="GO:0000902">
    <property type="term" value="P:cell morphogenesis"/>
    <property type="evidence" value="ECO:0007669"/>
    <property type="project" value="UniProtKB-UniRule"/>
</dbReference>
<dbReference type="GO" id="GO:0071555">
    <property type="term" value="P:cell wall organization"/>
    <property type="evidence" value="ECO:0007669"/>
    <property type="project" value="UniProtKB-KW"/>
</dbReference>
<dbReference type="GO" id="GO:0009245">
    <property type="term" value="P:lipid A biosynthetic process"/>
    <property type="evidence" value="ECO:0007669"/>
    <property type="project" value="UniProtKB-UniRule"/>
</dbReference>
<dbReference type="GO" id="GO:0009252">
    <property type="term" value="P:peptidoglycan biosynthetic process"/>
    <property type="evidence" value="ECO:0007669"/>
    <property type="project" value="UniProtKB-UniRule"/>
</dbReference>
<dbReference type="GO" id="GO:0008360">
    <property type="term" value="P:regulation of cell shape"/>
    <property type="evidence" value="ECO:0007669"/>
    <property type="project" value="UniProtKB-KW"/>
</dbReference>
<dbReference type="GO" id="GO:0006048">
    <property type="term" value="P:UDP-N-acetylglucosamine biosynthetic process"/>
    <property type="evidence" value="ECO:0007669"/>
    <property type="project" value="UniProtKB-UniPathway"/>
</dbReference>
<dbReference type="CDD" id="cd02540">
    <property type="entry name" value="GT2_GlmU_N_bac"/>
    <property type="match status" value="1"/>
</dbReference>
<dbReference type="CDD" id="cd03353">
    <property type="entry name" value="LbH_GlmU_C"/>
    <property type="match status" value="1"/>
</dbReference>
<dbReference type="Gene3D" id="2.160.10.10">
    <property type="entry name" value="Hexapeptide repeat proteins"/>
    <property type="match status" value="1"/>
</dbReference>
<dbReference type="Gene3D" id="3.90.550.10">
    <property type="entry name" value="Spore Coat Polysaccharide Biosynthesis Protein SpsA, Chain A"/>
    <property type="match status" value="1"/>
</dbReference>
<dbReference type="HAMAP" id="MF_01631">
    <property type="entry name" value="GlmU"/>
    <property type="match status" value="1"/>
</dbReference>
<dbReference type="InterPro" id="IPR005882">
    <property type="entry name" value="Bifunctional_GlmU"/>
</dbReference>
<dbReference type="InterPro" id="IPR050065">
    <property type="entry name" value="GlmU-like"/>
</dbReference>
<dbReference type="InterPro" id="IPR038009">
    <property type="entry name" value="GlmU_C_LbH"/>
</dbReference>
<dbReference type="InterPro" id="IPR001451">
    <property type="entry name" value="Hexapep"/>
</dbReference>
<dbReference type="InterPro" id="IPR005835">
    <property type="entry name" value="NTP_transferase_dom"/>
</dbReference>
<dbReference type="InterPro" id="IPR029044">
    <property type="entry name" value="Nucleotide-diphossugar_trans"/>
</dbReference>
<dbReference type="InterPro" id="IPR011004">
    <property type="entry name" value="Trimer_LpxA-like_sf"/>
</dbReference>
<dbReference type="NCBIfam" id="TIGR01173">
    <property type="entry name" value="glmU"/>
    <property type="match status" value="1"/>
</dbReference>
<dbReference type="NCBIfam" id="NF010934">
    <property type="entry name" value="PRK14354.1"/>
    <property type="match status" value="1"/>
</dbReference>
<dbReference type="PANTHER" id="PTHR43584:SF3">
    <property type="entry name" value="BIFUNCTIONAL PROTEIN GLMU"/>
    <property type="match status" value="1"/>
</dbReference>
<dbReference type="PANTHER" id="PTHR43584">
    <property type="entry name" value="NUCLEOTIDYL TRANSFERASE"/>
    <property type="match status" value="1"/>
</dbReference>
<dbReference type="Pfam" id="PF00132">
    <property type="entry name" value="Hexapep"/>
    <property type="match status" value="2"/>
</dbReference>
<dbReference type="Pfam" id="PF00483">
    <property type="entry name" value="NTP_transferase"/>
    <property type="match status" value="1"/>
</dbReference>
<dbReference type="SUPFAM" id="SSF53448">
    <property type="entry name" value="Nucleotide-diphospho-sugar transferases"/>
    <property type="match status" value="1"/>
</dbReference>
<dbReference type="SUPFAM" id="SSF51161">
    <property type="entry name" value="Trimeric LpxA-like enzymes"/>
    <property type="match status" value="1"/>
</dbReference>
<comment type="function">
    <text evidence="1">Catalyzes the last two sequential reactions in the de novo biosynthetic pathway for UDP-N-acetylglucosamine (UDP-GlcNAc). The C-terminal domain catalyzes the transfer of acetyl group from acetyl coenzyme A to glucosamine-1-phosphate (GlcN-1-P) to produce N-acetylglucosamine-1-phosphate (GlcNAc-1-P), which is converted into UDP-GlcNAc by the transfer of uridine 5-monophosphate (from uridine 5-triphosphate), a reaction catalyzed by the N-terminal domain.</text>
</comment>
<comment type="catalytic activity">
    <reaction evidence="1">
        <text>alpha-D-glucosamine 1-phosphate + acetyl-CoA = N-acetyl-alpha-D-glucosamine 1-phosphate + CoA + H(+)</text>
        <dbReference type="Rhea" id="RHEA:13725"/>
        <dbReference type="ChEBI" id="CHEBI:15378"/>
        <dbReference type="ChEBI" id="CHEBI:57287"/>
        <dbReference type="ChEBI" id="CHEBI:57288"/>
        <dbReference type="ChEBI" id="CHEBI:57776"/>
        <dbReference type="ChEBI" id="CHEBI:58516"/>
        <dbReference type="EC" id="2.3.1.157"/>
    </reaction>
</comment>
<comment type="catalytic activity">
    <reaction evidence="1">
        <text>N-acetyl-alpha-D-glucosamine 1-phosphate + UTP + H(+) = UDP-N-acetyl-alpha-D-glucosamine + diphosphate</text>
        <dbReference type="Rhea" id="RHEA:13509"/>
        <dbReference type="ChEBI" id="CHEBI:15378"/>
        <dbReference type="ChEBI" id="CHEBI:33019"/>
        <dbReference type="ChEBI" id="CHEBI:46398"/>
        <dbReference type="ChEBI" id="CHEBI:57705"/>
        <dbReference type="ChEBI" id="CHEBI:57776"/>
        <dbReference type="EC" id="2.7.7.23"/>
    </reaction>
</comment>
<comment type="cofactor">
    <cofactor evidence="1">
        <name>Mg(2+)</name>
        <dbReference type="ChEBI" id="CHEBI:18420"/>
    </cofactor>
    <text evidence="1">Binds 1 Mg(2+) ion per subunit.</text>
</comment>
<comment type="pathway">
    <text evidence="1">Nucleotide-sugar biosynthesis; UDP-N-acetyl-alpha-D-glucosamine biosynthesis; N-acetyl-alpha-D-glucosamine 1-phosphate from alpha-D-glucosamine 6-phosphate (route II): step 2/2.</text>
</comment>
<comment type="pathway">
    <text evidence="1">Nucleotide-sugar biosynthesis; UDP-N-acetyl-alpha-D-glucosamine biosynthesis; UDP-N-acetyl-alpha-D-glucosamine from N-acetyl-alpha-D-glucosamine 1-phosphate: step 1/1.</text>
</comment>
<comment type="pathway">
    <text evidence="1">Bacterial outer membrane biogenesis; LPS lipid A biosynthesis.</text>
</comment>
<comment type="subunit">
    <text evidence="1">Homotrimer.</text>
</comment>
<comment type="subcellular location">
    <subcellularLocation>
        <location evidence="1">Cytoplasm</location>
    </subcellularLocation>
</comment>
<comment type="similarity">
    <text evidence="1">In the N-terminal section; belongs to the N-acetylglucosamine-1-phosphate uridyltransferase family.</text>
</comment>
<comment type="similarity">
    <text evidence="1">In the C-terminal section; belongs to the transferase hexapeptide repeat family.</text>
</comment>
<keyword id="KW-0012">Acyltransferase</keyword>
<keyword id="KW-0133">Cell shape</keyword>
<keyword id="KW-0961">Cell wall biogenesis/degradation</keyword>
<keyword id="KW-0963">Cytoplasm</keyword>
<keyword id="KW-0460">Magnesium</keyword>
<keyword id="KW-0479">Metal-binding</keyword>
<keyword id="KW-0511">Multifunctional enzyme</keyword>
<keyword id="KW-0548">Nucleotidyltransferase</keyword>
<keyword id="KW-0573">Peptidoglycan synthesis</keyword>
<keyword id="KW-0677">Repeat</keyword>
<keyword id="KW-0808">Transferase</keyword>